<protein>
    <recommendedName>
        <fullName evidence="1">Protein Syd</fullName>
    </recommendedName>
</protein>
<reference key="1">
    <citation type="journal article" date="2005" name="Nucleic Acids Res.">
        <title>The genome sequence of Salmonella enterica serovar Choleraesuis, a highly invasive and resistant zoonotic pathogen.</title>
        <authorList>
            <person name="Chiu C.-H."/>
            <person name="Tang P."/>
            <person name="Chu C."/>
            <person name="Hu S."/>
            <person name="Bao Q."/>
            <person name="Yu J."/>
            <person name="Chou Y.-Y."/>
            <person name="Wang H.-S."/>
            <person name="Lee Y.-S."/>
        </authorList>
    </citation>
    <scope>NUCLEOTIDE SEQUENCE [LARGE SCALE GENOMIC DNA]</scope>
    <source>
        <strain>SC-B67</strain>
    </source>
</reference>
<comment type="function">
    <text evidence="1">Interacts with the SecY protein in vivo. May bind preferentially to an uncomplexed state of SecY, thus functioning either as a chelating agent for excess SecY in the cell or as a regulatory factor that negatively controls the translocase function.</text>
</comment>
<comment type="subcellular location">
    <subcellularLocation>
        <location evidence="1">Cell inner membrane</location>
        <topology evidence="1">Peripheral membrane protein</topology>
        <orientation evidence="1">Cytoplasmic side</orientation>
    </subcellularLocation>
    <text evidence="1">Loosely associated with the cytoplasmic side of the inner membrane, probably via SecY.</text>
</comment>
<comment type="similarity">
    <text evidence="1">Belongs to the Syd family.</text>
</comment>
<accession>Q57KF0</accession>
<dbReference type="EMBL" id="AE017220">
    <property type="protein sequence ID" value="AAX66812.1"/>
    <property type="molecule type" value="Genomic_DNA"/>
</dbReference>
<dbReference type="RefSeq" id="WP_000343990.1">
    <property type="nucleotide sequence ID" value="NC_006905.1"/>
</dbReference>
<dbReference type="SMR" id="Q57KF0"/>
<dbReference type="KEGG" id="sec:SCH_2906"/>
<dbReference type="HOGENOM" id="CLU_121866_0_0_6"/>
<dbReference type="Proteomes" id="UP000000538">
    <property type="component" value="Chromosome"/>
</dbReference>
<dbReference type="GO" id="GO:0009898">
    <property type="term" value="C:cytoplasmic side of plasma membrane"/>
    <property type="evidence" value="ECO:0007669"/>
    <property type="project" value="InterPro"/>
</dbReference>
<dbReference type="CDD" id="cd16323">
    <property type="entry name" value="Syd"/>
    <property type="match status" value="1"/>
</dbReference>
<dbReference type="Gene3D" id="3.40.1580.20">
    <property type="entry name" value="Syd protein"/>
    <property type="match status" value="1"/>
</dbReference>
<dbReference type="HAMAP" id="MF_01104">
    <property type="entry name" value="Syd"/>
    <property type="match status" value="1"/>
</dbReference>
<dbReference type="InterPro" id="IPR009948">
    <property type="entry name" value="Syd"/>
</dbReference>
<dbReference type="InterPro" id="IPR038228">
    <property type="entry name" value="Syd_sf"/>
</dbReference>
<dbReference type="NCBIfam" id="NF003439">
    <property type="entry name" value="PRK04968.1"/>
    <property type="match status" value="1"/>
</dbReference>
<dbReference type="Pfam" id="PF07348">
    <property type="entry name" value="Syd"/>
    <property type="match status" value="1"/>
</dbReference>
<gene>
    <name evidence="1" type="primary">syd</name>
    <name type="ordered locus">SCH_2906</name>
</gene>
<keyword id="KW-0997">Cell inner membrane</keyword>
<keyword id="KW-1003">Cell membrane</keyword>
<keyword id="KW-0472">Membrane</keyword>
<organism>
    <name type="scientific">Salmonella choleraesuis (strain SC-B67)</name>
    <dbReference type="NCBI Taxonomy" id="321314"/>
    <lineage>
        <taxon>Bacteria</taxon>
        <taxon>Pseudomonadati</taxon>
        <taxon>Pseudomonadota</taxon>
        <taxon>Gammaproteobacteria</taxon>
        <taxon>Enterobacterales</taxon>
        <taxon>Enterobacteriaceae</taxon>
        <taxon>Salmonella</taxon>
    </lineage>
</organism>
<proteinExistence type="inferred from homology"/>
<sequence>MDELTAQALKAFTTRYCDAWQEKHGSWPLSEELYGVPSPCIISSTRDAVYWQPQPFEGEENVNAVERAFDIMVQPALHAFYTTQFAGDMPAQFADEKLTLLQTWSQDDFRRVQENLIGHLVTQKRLKLPPTLFIATQENELEVISVCNLSGEVIKETLGTRNRTVLAATLAEFLTQLNPLL</sequence>
<evidence type="ECO:0000255" key="1">
    <source>
        <dbReference type="HAMAP-Rule" id="MF_01104"/>
    </source>
</evidence>
<feature type="chain" id="PRO_0000214140" description="Protein Syd">
    <location>
        <begin position="1"/>
        <end position="181"/>
    </location>
</feature>
<name>SYDP_SALCH</name>